<feature type="chain" id="PRO_1000165526" description="Small ribosomal subunit protein uS11">
    <location>
        <begin position="1"/>
        <end position="133"/>
    </location>
</feature>
<feature type="region of interest" description="Disordered" evidence="2">
    <location>
        <begin position="1"/>
        <end position="23"/>
    </location>
</feature>
<feature type="compositionally biased region" description="Basic residues" evidence="2">
    <location>
        <begin position="7"/>
        <end position="17"/>
    </location>
</feature>
<evidence type="ECO:0000255" key="1">
    <source>
        <dbReference type="HAMAP-Rule" id="MF_01310"/>
    </source>
</evidence>
<evidence type="ECO:0000256" key="2">
    <source>
        <dbReference type="SAM" id="MobiDB-lite"/>
    </source>
</evidence>
<evidence type="ECO:0000305" key="3"/>
<accession>B8HCX5</accession>
<proteinExistence type="inferred from homology"/>
<reference key="1">
    <citation type="submission" date="2009-01" db="EMBL/GenBank/DDBJ databases">
        <title>Complete sequence of chromosome of Arthrobacter chlorophenolicus A6.</title>
        <authorList>
            <consortium name="US DOE Joint Genome Institute"/>
            <person name="Lucas S."/>
            <person name="Copeland A."/>
            <person name="Lapidus A."/>
            <person name="Glavina del Rio T."/>
            <person name="Tice H."/>
            <person name="Bruce D."/>
            <person name="Goodwin L."/>
            <person name="Pitluck S."/>
            <person name="Goltsman E."/>
            <person name="Clum A."/>
            <person name="Larimer F."/>
            <person name="Land M."/>
            <person name="Hauser L."/>
            <person name="Kyrpides N."/>
            <person name="Mikhailova N."/>
            <person name="Jansson J."/>
            <person name="Richardson P."/>
        </authorList>
    </citation>
    <scope>NUCLEOTIDE SEQUENCE [LARGE SCALE GENOMIC DNA]</scope>
    <source>
        <strain>ATCC 700700 / DSM 12829 / CIP 107037 / JCM 12360 / KCTC 9906 / NCIMB 13794 / A6</strain>
    </source>
</reference>
<name>RS11_PSECP</name>
<protein>
    <recommendedName>
        <fullName evidence="1">Small ribosomal subunit protein uS11</fullName>
    </recommendedName>
    <alternativeName>
        <fullName evidence="3">30S ribosomal protein S11</fullName>
    </alternativeName>
</protein>
<organism>
    <name type="scientific">Pseudarthrobacter chlorophenolicus (strain ATCC 700700 / DSM 12829 / CIP 107037 / JCM 12360 / KCTC 9906 / NCIMB 13794 / A6)</name>
    <name type="common">Arthrobacter chlorophenolicus</name>
    <dbReference type="NCBI Taxonomy" id="452863"/>
    <lineage>
        <taxon>Bacteria</taxon>
        <taxon>Bacillati</taxon>
        <taxon>Actinomycetota</taxon>
        <taxon>Actinomycetes</taxon>
        <taxon>Micrococcales</taxon>
        <taxon>Micrococcaceae</taxon>
        <taxon>Pseudarthrobacter</taxon>
    </lineage>
</organism>
<sequence>MPPKTRGAVRKPRKKDKKNIALGQAHIKSTFNNTIVSITDPTGAVISWASSGEVGFKGSRKSTPFAAQMAAEAAAKRAQEHGMRKVDVFVKGPGSGRETAIRSLQAAGLEVGSIQDVTPAAHNGCRPPKRRRV</sequence>
<dbReference type="EMBL" id="CP001341">
    <property type="protein sequence ID" value="ACL40621.1"/>
    <property type="molecule type" value="Genomic_DNA"/>
</dbReference>
<dbReference type="RefSeq" id="WP_009358720.1">
    <property type="nucleotide sequence ID" value="NC_011886.1"/>
</dbReference>
<dbReference type="SMR" id="B8HCX5"/>
<dbReference type="STRING" id="452863.Achl_2656"/>
<dbReference type="KEGG" id="ach:Achl_2656"/>
<dbReference type="eggNOG" id="COG0100">
    <property type="taxonomic scope" value="Bacteria"/>
</dbReference>
<dbReference type="HOGENOM" id="CLU_072439_5_0_11"/>
<dbReference type="OrthoDB" id="9806415at2"/>
<dbReference type="Proteomes" id="UP000002505">
    <property type="component" value="Chromosome"/>
</dbReference>
<dbReference type="GO" id="GO:1990904">
    <property type="term" value="C:ribonucleoprotein complex"/>
    <property type="evidence" value="ECO:0007669"/>
    <property type="project" value="UniProtKB-KW"/>
</dbReference>
<dbReference type="GO" id="GO:0005840">
    <property type="term" value="C:ribosome"/>
    <property type="evidence" value="ECO:0007669"/>
    <property type="project" value="UniProtKB-KW"/>
</dbReference>
<dbReference type="GO" id="GO:0019843">
    <property type="term" value="F:rRNA binding"/>
    <property type="evidence" value="ECO:0007669"/>
    <property type="project" value="UniProtKB-UniRule"/>
</dbReference>
<dbReference type="GO" id="GO:0003735">
    <property type="term" value="F:structural constituent of ribosome"/>
    <property type="evidence" value="ECO:0007669"/>
    <property type="project" value="InterPro"/>
</dbReference>
<dbReference type="GO" id="GO:0006412">
    <property type="term" value="P:translation"/>
    <property type="evidence" value="ECO:0007669"/>
    <property type="project" value="UniProtKB-UniRule"/>
</dbReference>
<dbReference type="FunFam" id="3.30.420.80:FF:000001">
    <property type="entry name" value="30S ribosomal protein S11"/>
    <property type="match status" value="1"/>
</dbReference>
<dbReference type="Gene3D" id="3.30.420.80">
    <property type="entry name" value="Ribosomal protein S11"/>
    <property type="match status" value="1"/>
</dbReference>
<dbReference type="HAMAP" id="MF_01310">
    <property type="entry name" value="Ribosomal_uS11"/>
    <property type="match status" value="1"/>
</dbReference>
<dbReference type="InterPro" id="IPR001971">
    <property type="entry name" value="Ribosomal_uS11"/>
</dbReference>
<dbReference type="InterPro" id="IPR019981">
    <property type="entry name" value="Ribosomal_uS11_bac-type"/>
</dbReference>
<dbReference type="InterPro" id="IPR018102">
    <property type="entry name" value="Ribosomal_uS11_CS"/>
</dbReference>
<dbReference type="InterPro" id="IPR036967">
    <property type="entry name" value="Ribosomal_uS11_sf"/>
</dbReference>
<dbReference type="NCBIfam" id="NF003698">
    <property type="entry name" value="PRK05309.1"/>
    <property type="match status" value="1"/>
</dbReference>
<dbReference type="NCBIfam" id="TIGR03632">
    <property type="entry name" value="uS11_bact"/>
    <property type="match status" value="1"/>
</dbReference>
<dbReference type="PANTHER" id="PTHR11759">
    <property type="entry name" value="40S RIBOSOMAL PROTEIN S14/30S RIBOSOMAL PROTEIN S11"/>
    <property type="match status" value="1"/>
</dbReference>
<dbReference type="Pfam" id="PF00411">
    <property type="entry name" value="Ribosomal_S11"/>
    <property type="match status" value="1"/>
</dbReference>
<dbReference type="PIRSF" id="PIRSF002131">
    <property type="entry name" value="Ribosomal_S11"/>
    <property type="match status" value="1"/>
</dbReference>
<dbReference type="SUPFAM" id="SSF53137">
    <property type="entry name" value="Translational machinery components"/>
    <property type="match status" value="1"/>
</dbReference>
<dbReference type="PROSITE" id="PS00054">
    <property type="entry name" value="RIBOSOMAL_S11"/>
    <property type="match status" value="1"/>
</dbReference>
<gene>
    <name evidence="1" type="primary">rpsK</name>
    <name type="ordered locus">Achl_2656</name>
</gene>
<comment type="function">
    <text evidence="1">Located on the platform of the 30S subunit, it bridges several disparate RNA helices of the 16S rRNA. Forms part of the Shine-Dalgarno cleft in the 70S ribosome.</text>
</comment>
<comment type="subunit">
    <text evidence="1">Part of the 30S ribosomal subunit. Interacts with proteins S7 and S18. Binds to IF-3.</text>
</comment>
<comment type="similarity">
    <text evidence="1">Belongs to the universal ribosomal protein uS11 family.</text>
</comment>
<keyword id="KW-0687">Ribonucleoprotein</keyword>
<keyword id="KW-0689">Ribosomal protein</keyword>
<keyword id="KW-0694">RNA-binding</keyword>
<keyword id="KW-0699">rRNA-binding</keyword>